<sequence length="208" mass="23836">MDTSHKVYNFECPFELAKVEMKAISNTMHKVDDFVSTIDVNFSDSELDDKVDDLEIKIEKVSGPLLNRYLGSVGKVVFLIFSFLFFGSIKLVLKCFYHLFKCVFCNPLTRCFCSIIFTIIFYTLLFVSCYLLWHYFGDVIIQTIKDINNNRSVNFTNETENFNSKVETTTMKIIQLIFSKSDNNGVEHIIKSANVTSGQTANFTLLNG</sequence>
<feature type="chain" id="PRO_0000403402" description="Uncharacterized protein VP9-2">
    <location>
        <begin position="1"/>
        <end position="208"/>
    </location>
</feature>
<reference key="1">
    <citation type="journal article" date="1998" name="J. Gen. Virol.">
        <title>Molecular characterization of Fiji disease fijivirus genome segment 9.</title>
        <authorList>
            <person name="Soo H.M."/>
            <person name="Handley J.A."/>
            <person name="Maugeri M.M."/>
            <person name="Burns P."/>
            <person name="Smith G.R."/>
            <person name="Dale J.L."/>
            <person name="Harding R.M."/>
        </authorList>
    </citation>
    <scope>NUCLEOTIDE SEQUENCE [GENOMIC RNA]</scope>
</reference>
<protein>
    <recommendedName>
        <fullName>Uncharacterized protein VP9-2</fullName>
    </recommendedName>
</protein>
<name>VP92_FDVS</name>
<organismHost>
    <name type="scientific">Saccharum officinarum</name>
    <name type="common">Sugarcane</name>
    <dbReference type="NCBI Taxonomy" id="4547"/>
</organismHost>
<organism>
    <name type="scientific">Fiji disease virus (isolate Sugarcane)</name>
    <name type="common">FDV</name>
    <dbReference type="NCBI Taxonomy" id="648172"/>
    <lineage>
        <taxon>Viruses</taxon>
        <taxon>Riboviria</taxon>
        <taxon>Orthornavirae</taxon>
        <taxon>Duplornaviricota</taxon>
        <taxon>Resentoviricetes</taxon>
        <taxon>Reovirales</taxon>
        <taxon>Spinareoviridae</taxon>
        <taxon>Fijivirus</taxon>
        <taxon>Fiji disease virus</taxon>
    </lineage>
</organism>
<gene>
    <name type="primary">S9</name>
</gene>
<dbReference type="EMBL" id="AF050086">
    <property type="protein sequence ID" value="AAD04816.1"/>
    <property type="molecule type" value="Genomic_RNA"/>
</dbReference>
<dbReference type="RefSeq" id="YP_249759.1">
    <property type="nucleotide sequence ID" value="NC_007156.1"/>
</dbReference>
<dbReference type="KEGG" id="vg:5130478"/>
<dbReference type="Proteomes" id="UP000001677">
    <property type="component" value="Genome"/>
</dbReference>
<dbReference type="InterPro" id="IPR009650">
    <property type="entry name" value="Fijivirus_P9-2"/>
</dbReference>
<dbReference type="Pfam" id="PF06837">
    <property type="entry name" value="Fijivirus_P9-2"/>
    <property type="match status" value="1"/>
</dbReference>
<proteinExistence type="predicted"/>
<accession>Q9YX37</accession>
<keyword id="KW-1185">Reference proteome</keyword>